<proteinExistence type="inferred from homology"/>
<comment type="function">
    <text evidence="1">Essential component of the PAM complex, a complex required for the translocation of transit peptide-containing proteins from the inner membrane into the mitochondrial matrix in an ATP-dependent manner. In the complex, it is required to stimulate activity of mtHSP70 (SSC1) (By similarity).</text>
</comment>
<comment type="subunit">
    <text evidence="1">Heterodimer with PAM16. Component of the PAM complex, at least composed of mtHsp70, MGE1, TIM44, PAM16, PAM17 and PAM18 (By similarity).</text>
</comment>
<comment type="subcellular location">
    <subcellularLocation>
        <location evidence="1">Mitochondrion inner membrane</location>
        <topology evidence="1">Single-pass membrane protein</topology>
    </subcellularLocation>
</comment>
<comment type="domain">
    <text evidence="1">The J domain is essential for co-chaperone activity and mediates the heterodimerization with the J-like domain of PAM16.</text>
</comment>
<comment type="similarity">
    <text evidence="4">Belongs to the TIM14 family.</text>
</comment>
<protein>
    <recommendedName>
        <fullName>Mitochondrial import inner membrane translocase subunit TIM14</fullName>
    </recommendedName>
    <alternativeName>
        <fullName>Presequence translocated-associated motor subunit PAM18</fullName>
    </alternativeName>
</protein>
<gene>
    <name type="primary">PAM18</name>
    <name type="synonym">TIM14</name>
    <name type="ordered locus">CAGL0J00935g</name>
</gene>
<keyword id="KW-0143">Chaperone</keyword>
<keyword id="KW-0472">Membrane</keyword>
<keyword id="KW-0496">Mitochondrion</keyword>
<keyword id="KW-0999">Mitochondrion inner membrane</keyword>
<keyword id="KW-0653">Protein transport</keyword>
<keyword id="KW-1185">Reference proteome</keyword>
<keyword id="KW-0811">Translocation</keyword>
<keyword id="KW-0812">Transmembrane</keyword>
<keyword id="KW-1133">Transmembrane helix</keyword>
<keyword id="KW-0813">Transport</keyword>
<organism>
    <name type="scientific">Candida glabrata (strain ATCC 2001 / BCRC 20586 / JCM 3761 / NBRC 0622 / NRRL Y-65 / CBS 138)</name>
    <name type="common">Yeast</name>
    <name type="synonym">Nakaseomyces glabratus</name>
    <dbReference type="NCBI Taxonomy" id="284593"/>
    <lineage>
        <taxon>Eukaryota</taxon>
        <taxon>Fungi</taxon>
        <taxon>Dikarya</taxon>
        <taxon>Ascomycota</taxon>
        <taxon>Saccharomycotina</taxon>
        <taxon>Saccharomycetes</taxon>
        <taxon>Saccharomycetales</taxon>
        <taxon>Saccharomycetaceae</taxon>
        <taxon>Nakaseomyces</taxon>
    </lineage>
</organism>
<accession>Q6FPU1</accession>
<name>TIM14_CANGA</name>
<feature type="chain" id="PRO_0000071110" description="Mitochondrial import inner membrane translocase subunit TIM14">
    <location>
        <begin position="1"/>
        <end position="153"/>
    </location>
</feature>
<feature type="topological domain" description="Mitochondrial intermembrane" evidence="2">
    <location>
        <begin position="1"/>
        <end position="43"/>
    </location>
</feature>
<feature type="transmembrane region" description="Helical" evidence="2">
    <location>
        <begin position="44"/>
        <end position="66"/>
    </location>
</feature>
<feature type="topological domain" description="Mitochondrial matrix" evidence="2">
    <location>
        <begin position="67"/>
        <end position="153"/>
    </location>
</feature>
<feature type="domain" description="J" evidence="3">
    <location>
        <begin position="96"/>
        <end position="153"/>
    </location>
</feature>
<sequence>MDGTGISDGSSVTGDAAAGFPAGATQAPGSKQGMDLYFDNALQYMGEHPVLAGVGGFLALYVGAGVYKGVQTRLNGGKAATQFLKGGFDPKMNAKEALQILNLKENNLTTKKLKEVHRKIMLANHPDKGGSPYLATKINEAKDFLEKKGIVRK</sequence>
<reference key="1">
    <citation type="journal article" date="2004" name="Nature">
        <title>Genome evolution in yeasts.</title>
        <authorList>
            <person name="Dujon B."/>
            <person name="Sherman D."/>
            <person name="Fischer G."/>
            <person name="Durrens P."/>
            <person name="Casaregola S."/>
            <person name="Lafontaine I."/>
            <person name="de Montigny J."/>
            <person name="Marck C."/>
            <person name="Neuveglise C."/>
            <person name="Talla E."/>
            <person name="Goffard N."/>
            <person name="Frangeul L."/>
            <person name="Aigle M."/>
            <person name="Anthouard V."/>
            <person name="Babour A."/>
            <person name="Barbe V."/>
            <person name="Barnay S."/>
            <person name="Blanchin S."/>
            <person name="Beckerich J.-M."/>
            <person name="Beyne E."/>
            <person name="Bleykasten C."/>
            <person name="Boisrame A."/>
            <person name="Boyer J."/>
            <person name="Cattolico L."/>
            <person name="Confanioleri F."/>
            <person name="de Daruvar A."/>
            <person name="Despons L."/>
            <person name="Fabre E."/>
            <person name="Fairhead C."/>
            <person name="Ferry-Dumazet H."/>
            <person name="Groppi A."/>
            <person name="Hantraye F."/>
            <person name="Hennequin C."/>
            <person name="Jauniaux N."/>
            <person name="Joyet P."/>
            <person name="Kachouri R."/>
            <person name="Kerrest A."/>
            <person name="Koszul R."/>
            <person name="Lemaire M."/>
            <person name="Lesur I."/>
            <person name="Ma L."/>
            <person name="Muller H."/>
            <person name="Nicaud J.-M."/>
            <person name="Nikolski M."/>
            <person name="Oztas S."/>
            <person name="Ozier-Kalogeropoulos O."/>
            <person name="Pellenz S."/>
            <person name="Potier S."/>
            <person name="Richard G.-F."/>
            <person name="Straub M.-L."/>
            <person name="Suleau A."/>
            <person name="Swennen D."/>
            <person name="Tekaia F."/>
            <person name="Wesolowski-Louvel M."/>
            <person name="Westhof E."/>
            <person name="Wirth B."/>
            <person name="Zeniou-Meyer M."/>
            <person name="Zivanovic Y."/>
            <person name="Bolotin-Fukuhara M."/>
            <person name="Thierry A."/>
            <person name="Bouchier C."/>
            <person name="Caudron B."/>
            <person name="Scarpelli C."/>
            <person name="Gaillardin C."/>
            <person name="Weissenbach J."/>
            <person name="Wincker P."/>
            <person name="Souciet J.-L."/>
        </authorList>
    </citation>
    <scope>NUCLEOTIDE SEQUENCE [LARGE SCALE GENOMIC DNA]</scope>
    <source>
        <strain>ATCC 2001 / BCRC 20586 / JCM 3761 / NBRC 0622 / NRRL Y-65 / CBS 138</strain>
    </source>
</reference>
<evidence type="ECO:0000250" key="1"/>
<evidence type="ECO:0000255" key="2"/>
<evidence type="ECO:0000255" key="3">
    <source>
        <dbReference type="PROSITE-ProRule" id="PRU00286"/>
    </source>
</evidence>
<evidence type="ECO:0000305" key="4"/>
<dbReference type="EMBL" id="CR380956">
    <property type="protein sequence ID" value="CAG60700.1"/>
    <property type="molecule type" value="Genomic_DNA"/>
</dbReference>
<dbReference type="RefSeq" id="XP_447753.1">
    <property type="nucleotide sequence ID" value="XM_447753.1"/>
</dbReference>
<dbReference type="SMR" id="Q6FPU1"/>
<dbReference type="FunCoup" id="Q6FPU1">
    <property type="interactions" value="59"/>
</dbReference>
<dbReference type="STRING" id="284593.Q6FPU1"/>
<dbReference type="EnsemblFungi" id="CAGL0J00935g-T">
    <property type="protein sequence ID" value="CAGL0J00935g-T-p1"/>
    <property type="gene ID" value="CAGL0J00935g"/>
</dbReference>
<dbReference type="KEGG" id="cgr:2889874"/>
<dbReference type="CGD" id="CAL0133248">
    <property type="gene designation" value="CAGL0J00935g"/>
</dbReference>
<dbReference type="VEuPathDB" id="FungiDB:CAGL0J00935g"/>
<dbReference type="eggNOG" id="KOG0723">
    <property type="taxonomic scope" value="Eukaryota"/>
</dbReference>
<dbReference type="HOGENOM" id="CLU_017633_13_0_1"/>
<dbReference type="InParanoid" id="Q6FPU1"/>
<dbReference type="OMA" id="EGSAEWY"/>
<dbReference type="Proteomes" id="UP000002428">
    <property type="component" value="Chromosome J"/>
</dbReference>
<dbReference type="GO" id="GO:0001405">
    <property type="term" value="C:PAM complex, Tim23 associated import motor"/>
    <property type="evidence" value="ECO:0007669"/>
    <property type="project" value="EnsemblFungi"/>
</dbReference>
<dbReference type="GO" id="GO:0001671">
    <property type="term" value="F:ATPase activator activity"/>
    <property type="evidence" value="ECO:0007669"/>
    <property type="project" value="EnsemblFungi"/>
</dbReference>
<dbReference type="GO" id="GO:0030150">
    <property type="term" value="P:protein import into mitochondrial matrix"/>
    <property type="evidence" value="ECO:0007669"/>
    <property type="project" value="EnsemblFungi"/>
</dbReference>
<dbReference type="CDD" id="cd06257">
    <property type="entry name" value="DnaJ"/>
    <property type="match status" value="1"/>
</dbReference>
<dbReference type="FunFam" id="1.10.287.110:FF:000001">
    <property type="entry name" value="Import inner membrane translocase subunit tim14"/>
    <property type="match status" value="1"/>
</dbReference>
<dbReference type="Gene3D" id="1.10.287.110">
    <property type="entry name" value="DnaJ domain"/>
    <property type="match status" value="1"/>
</dbReference>
<dbReference type="InterPro" id="IPR001623">
    <property type="entry name" value="DnaJ_domain"/>
</dbReference>
<dbReference type="InterPro" id="IPR036869">
    <property type="entry name" value="J_dom_sf"/>
</dbReference>
<dbReference type="PANTHER" id="PTHR12763">
    <property type="match status" value="1"/>
</dbReference>
<dbReference type="PANTHER" id="PTHR12763:SF28">
    <property type="entry name" value="GEO10507P1-RELATED"/>
    <property type="match status" value="1"/>
</dbReference>
<dbReference type="SMART" id="SM00271">
    <property type="entry name" value="DnaJ"/>
    <property type="match status" value="1"/>
</dbReference>
<dbReference type="SUPFAM" id="SSF46565">
    <property type="entry name" value="Chaperone J-domain"/>
    <property type="match status" value="1"/>
</dbReference>
<dbReference type="PROSITE" id="PS50076">
    <property type="entry name" value="DNAJ_2"/>
    <property type="match status" value="1"/>
</dbReference>